<protein>
    <recommendedName>
        <fullName evidence="1">2-C-methyl-D-erythritol 4-phosphate cytidylyltransferase</fullName>
        <ecNumber evidence="1">2.7.7.60</ecNumber>
    </recommendedName>
    <alternativeName>
        <fullName evidence="1">4-diphosphocytidyl-2C-methyl-D-erythritol synthase</fullName>
    </alternativeName>
    <alternativeName>
        <fullName evidence="1">MEP cytidylyltransferase</fullName>
        <shortName evidence="1">MCT</shortName>
    </alternativeName>
</protein>
<proteinExistence type="inferred from homology"/>
<comment type="function">
    <text evidence="1">Catalyzes the formation of 4-diphosphocytidyl-2-C-methyl-D-erythritol from CTP and 2-C-methyl-D-erythritol 4-phosphate (MEP).</text>
</comment>
<comment type="catalytic activity">
    <reaction evidence="1">
        <text>2-C-methyl-D-erythritol 4-phosphate + CTP + H(+) = 4-CDP-2-C-methyl-D-erythritol + diphosphate</text>
        <dbReference type="Rhea" id="RHEA:13429"/>
        <dbReference type="ChEBI" id="CHEBI:15378"/>
        <dbReference type="ChEBI" id="CHEBI:33019"/>
        <dbReference type="ChEBI" id="CHEBI:37563"/>
        <dbReference type="ChEBI" id="CHEBI:57823"/>
        <dbReference type="ChEBI" id="CHEBI:58262"/>
        <dbReference type="EC" id="2.7.7.60"/>
    </reaction>
</comment>
<comment type="pathway">
    <text evidence="1">Isoprenoid biosynthesis; isopentenyl diphosphate biosynthesis via DXP pathway; isopentenyl diphosphate from 1-deoxy-D-xylulose 5-phosphate: step 2/6.</text>
</comment>
<comment type="subunit">
    <text evidence="1">Homodimer.</text>
</comment>
<comment type="similarity">
    <text evidence="1">Belongs to the IspD/TarI cytidylyltransferase family. IspD subfamily.</text>
</comment>
<feature type="chain" id="PRO_0000075648" description="2-C-methyl-D-erythritol 4-phosphate cytidylyltransferase">
    <location>
        <begin position="1"/>
        <end position="229"/>
    </location>
</feature>
<feature type="site" description="Transition state stabilizer" evidence="1">
    <location>
        <position position="19"/>
    </location>
</feature>
<feature type="site" description="Transition state stabilizer" evidence="1">
    <location>
        <position position="26"/>
    </location>
</feature>
<feature type="site" description="Positions MEP for the nucleophilic attack" evidence="1">
    <location>
        <position position="154"/>
    </location>
</feature>
<feature type="site" description="Positions MEP for the nucleophilic attack" evidence="1">
    <location>
        <position position="210"/>
    </location>
</feature>
<sequence>MINHPEIIVIFPAAGIGKRMGYKYPKQYIKIKNKTILEHSISLFIDKIYVKKILIAINKKDYWFNKLSILKNKKINIVIGGKSRTESVISALKFVSKVDWVLVHDAVRPCLHKNDLNKLLKVINISPFGAILAAPIYDTVKKSYGNFISHTIKRNKLWRALTPQLFNLKILINCLKIITSKGEIITDESSALEKCGYKLNLVHGRSDNIKITYPEDLNFANFFINNIKE</sequence>
<evidence type="ECO:0000255" key="1">
    <source>
        <dbReference type="HAMAP-Rule" id="MF_00108"/>
    </source>
</evidence>
<dbReference type="EC" id="2.7.7.60" evidence="1"/>
<dbReference type="EMBL" id="BA000021">
    <property type="protein sequence ID" value="BAC24678.1"/>
    <property type="molecule type" value="Genomic_DNA"/>
</dbReference>
<dbReference type="SMR" id="Q8D223"/>
<dbReference type="STRING" id="36870.gene:10369041"/>
<dbReference type="KEGG" id="wbr:ygbP"/>
<dbReference type="eggNOG" id="COG1211">
    <property type="taxonomic scope" value="Bacteria"/>
</dbReference>
<dbReference type="HOGENOM" id="CLU_061281_3_1_6"/>
<dbReference type="OrthoDB" id="9806837at2"/>
<dbReference type="UniPathway" id="UPA00056">
    <property type="reaction ID" value="UER00093"/>
</dbReference>
<dbReference type="Proteomes" id="UP000000562">
    <property type="component" value="Chromosome"/>
</dbReference>
<dbReference type="GO" id="GO:0050518">
    <property type="term" value="F:2-C-methyl-D-erythritol 4-phosphate cytidylyltransferase activity"/>
    <property type="evidence" value="ECO:0007669"/>
    <property type="project" value="UniProtKB-UniRule"/>
</dbReference>
<dbReference type="GO" id="GO:0019288">
    <property type="term" value="P:isopentenyl diphosphate biosynthetic process, methylerythritol 4-phosphate pathway"/>
    <property type="evidence" value="ECO:0007669"/>
    <property type="project" value="UniProtKB-UniRule"/>
</dbReference>
<dbReference type="CDD" id="cd02516">
    <property type="entry name" value="CDP-ME_synthetase"/>
    <property type="match status" value="1"/>
</dbReference>
<dbReference type="FunFam" id="3.90.550.10:FF:000003">
    <property type="entry name" value="2-C-methyl-D-erythritol 4-phosphate cytidylyltransferase"/>
    <property type="match status" value="1"/>
</dbReference>
<dbReference type="Gene3D" id="3.90.550.10">
    <property type="entry name" value="Spore Coat Polysaccharide Biosynthesis Protein SpsA, Chain A"/>
    <property type="match status" value="1"/>
</dbReference>
<dbReference type="HAMAP" id="MF_00108">
    <property type="entry name" value="IspD"/>
    <property type="match status" value="1"/>
</dbReference>
<dbReference type="InterPro" id="IPR001228">
    <property type="entry name" value="IspD"/>
</dbReference>
<dbReference type="InterPro" id="IPR034683">
    <property type="entry name" value="IspD/TarI"/>
</dbReference>
<dbReference type="InterPro" id="IPR050088">
    <property type="entry name" value="IspD/TarI_cytidylyltransf_bact"/>
</dbReference>
<dbReference type="InterPro" id="IPR018294">
    <property type="entry name" value="ISPD_synthase_CS"/>
</dbReference>
<dbReference type="InterPro" id="IPR029044">
    <property type="entry name" value="Nucleotide-diphossugar_trans"/>
</dbReference>
<dbReference type="NCBIfam" id="TIGR00453">
    <property type="entry name" value="ispD"/>
    <property type="match status" value="1"/>
</dbReference>
<dbReference type="PANTHER" id="PTHR32125">
    <property type="entry name" value="2-C-METHYL-D-ERYTHRITOL 4-PHOSPHATE CYTIDYLYLTRANSFERASE, CHLOROPLASTIC"/>
    <property type="match status" value="1"/>
</dbReference>
<dbReference type="PANTHER" id="PTHR32125:SF4">
    <property type="entry name" value="2-C-METHYL-D-ERYTHRITOL 4-PHOSPHATE CYTIDYLYLTRANSFERASE, CHLOROPLASTIC"/>
    <property type="match status" value="1"/>
</dbReference>
<dbReference type="Pfam" id="PF01128">
    <property type="entry name" value="IspD"/>
    <property type="match status" value="1"/>
</dbReference>
<dbReference type="SUPFAM" id="SSF53448">
    <property type="entry name" value="Nucleotide-diphospho-sugar transferases"/>
    <property type="match status" value="1"/>
</dbReference>
<dbReference type="PROSITE" id="PS01295">
    <property type="entry name" value="ISPD"/>
    <property type="match status" value="1"/>
</dbReference>
<keyword id="KW-0414">Isoprene biosynthesis</keyword>
<keyword id="KW-0548">Nucleotidyltransferase</keyword>
<keyword id="KW-1185">Reference proteome</keyword>
<keyword id="KW-0808">Transferase</keyword>
<gene>
    <name evidence="1" type="primary">ispD</name>
    <name type="ordered locus">WIGBR5320</name>
</gene>
<reference key="1">
    <citation type="journal article" date="2002" name="Nat. Genet.">
        <title>Genome sequence of the endocellular obligate symbiont of tsetse flies, Wigglesworthia glossinidia.</title>
        <authorList>
            <person name="Akman L."/>
            <person name="Yamashita A."/>
            <person name="Watanabe H."/>
            <person name="Oshima K."/>
            <person name="Shiba T."/>
            <person name="Hattori M."/>
            <person name="Aksoy S."/>
        </authorList>
    </citation>
    <scope>NUCLEOTIDE SEQUENCE [LARGE SCALE GENOMIC DNA]</scope>
</reference>
<accession>Q8D223</accession>
<organism>
    <name type="scientific">Wigglesworthia glossinidia brevipalpis</name>
    <dbReference type="NCBI Taxonomy" id="36870"/>
    <lineage>
        <taxon>Bacteria</taxon>
        <taxon>Pseudomonadati</taxon>
        <taxon>Pseudomonadota</taxon>
        <taxon>Gammaproteobacteria</taxon>
        <taxon>Enterobacterales</taxon>
        <taxon>Erwiniaceae</taxon>
        <taxon>Wigglesworthia</taxon>
    </lineage>
</organism>
<name>ISPD_WIGBR</name>